<organism>
    <name type="scientific">Xenopus tropicalis</name>
    <name type="common">Western clawed frog</name>
    <name type="synonym">Silurana tropicalis</name>
    <dbReference type="NCBI Taxonomy" id="8364"/>
    <lineage>
        <taxon>Eukaryota</taxon>
        <taxon>Metazoa</taxon>
        <taxon>Chordata</taxon>
        <taxon>Craniata</taxon>
        <taxon>Vertebrata</taxon>
        <taxon>Euteleostomi</taxon>
        <taxon>Amphibia</taxon>
        <taxon>Batrachia</taxon>
        <taxon>Anura</taxon>
        <taxon>Pipoidea</taxon>
        <taxon>Pipidae</taxon>
        <taxon>Xenopodinae</taxon>
        <taxon>Xenopus</taxon>
        <taxon>Silurana</taxon>
    </lineage>
</organism>
<comment type="function">
    <text evidence="2">Acts as a chaperone for the linker histone to facilitate deposition of histone B4 onto linker DNA. Required for both remodeling of sperm chromatin into nucleosomes, and linker histone binding to nucleosome core dimers. Plays a role in tissue-specific gene regulation. Required for primitive hemopoiesis, acting upstream of tal1/scl (By similarity).</text>
</comment>
<comment type="subunit">
    <text evidence="2">Forms homomultimers. Interacts with histone B4. Interacts with the B-type cyclins ccnb1 and ccnb2 (By similarity).</text>
</comment>
<comment type="subcellular location">
    <subcellularLocation>
        <location evidence="2">Cytoplasm</location>
    </subcellularLocation>
    <subcellularLocation>
        <location evidence="2">Nucleus</location>
    </subcellularLocation>
    <text evidence="2">Cytoplasmic prior to the midblastula transition, becoming predominantly nuclear subsequently.</text>
</comment>
<comment type="alternative products">
    <event type="alternative splicing"/>
    <isoform>
        <id>Q28EB4-1</id>
        <name>1</name>
        <sequence type="displayed"/>
    </isoform>
    <isoform>
        <id>Q28EB4-2</id>
        <name>2</name>
        <sequence type="described" ref="VSP_052858"/>
    </isoform>
</comment>
<comment type="domain">
    <text evidence="1">The NAP1L motif is required for the histone chaperone activity.</text>
</comment>
<comment type="domain">
    <text evidence="1">The acidic domains are probably involved in the interaction with histones.</text>
</comment>
<comment type="PTM">
    <text evidence="2">Phosphorylated by cyclin B-cdc2 kinase complexes.</text>
</comment>
<comment type="similarity">
    <text evidence="3">Belongs to the nucleosome assembly protein (NAP) family.</text>
</comment>
<evidence type="ECO:0000250" key="1">
    <source>
        <dbReference type="UniProtKB" id="P55209"/>
    </source>
</evidence>
<evidence type="ECO:0000250" key="2">
    <source>
        <dbReference type="UniProtKB" id="Q4U0Y4"/>
    </source>
</evidence>
<evidence type="ECO:0000255" key="3"/>
<evidence type="ECO:0000256" key="4">
    <source>
        <dbReference type="SAM" id="MobiDB-lite"/>
    </source>
</evidence>
<evidence type="ECO:0000303" key="5">
    <source ref="2"/>
</evidence>
<evidence type="ECO:0000305" key="6"/>
<evidence type="ECO:0000312" key="7">
    <source>
        <dbReference type="EMBL" id="AAH68215.1"/>
    </source>
</evidence>
<evidence type="ECO:0000312" key="8">
    <source>
        <dbReference type="EMBL" id="AAI23976.1"/>
    </source>
</evidence>
<evidence type="ECO:0000312" key="9">
    <source>
        <dbReference type="EMBL" id="AAI54890.1"/>
    </source>
</evidence>
<evidence type="ECO:0000312" key="10">
    <source>
        <dbReference type="EMBL" id="CAJ83249.1"/>
    </source>
</evidence>
<keyword id="KW-0025">Alternative splicing</keyword>
<keyword id="KW-0963">Cytoplasm</keyword>
<keyword id="KW-0217">Developmental protein</keyword>
<keyword id="KW-0221">Differentiation</keyword>
<keyword id="KW-0539">Nucleus</keyword>
<keyword id="KW-0597">Phosphoprotein</keyword>
<keyword id="KW-1185">Reference proteome</keyword>
<keyword id="KW-0744">Spermatogenesis</keyword>
<keyword id="KW-0804">Transcription</keyword>
<keyword id="KW-0805">Transcription regulation</keyword>
<feature type="chain" id="PRO_0000345636" description="Nucleosome assembly protein 1-like 1">
    <location>
        <begin position="1"/>
        <end position="393"/>
    </location>
</feature>
<feature type="region of interest" description="Disordered" evidence="4">
    <location>
        <begin position="1"/>
        <end position="36"/>
    </location>
</feature>
<feature type="region of interest" description="Disordered" evidence="4">
    <location>
        <begin position="132"/>
        <end position="165"/>
    </location>
</feature>
<feature type="region of interest" description="Disordered" evidence="4">
    <location>
        <begin position="347"/>
        <end position="393"/>
    </location>
</feature>
<feature type="short sequence motif" description="NAP1L motif" evidence="1">
    <location>
        <begin position="126"/>
        <end position="151"/>
    </location>
</feature>
<feature type="short sequence motif" description="Nuclear localization signal" evidence="3">
    <location>
        <begin position="274"/>
        <end position="280"/>
    </location>
</feature>
<feature type="compositionally biased region" description="Basic and acidic residues" evidence="4">
    <location>
        <begin position="1"/>
        <end position="10"/>
    </location>
</feature>
<feature type="compositionally biased region" description="Acidic residues" evidence="4">
    <location>
        <begin position="11"/>
        <end position="30"/>
    </location>
</feature>
<feature type="compositionally biased region" description="Acidic residues" evidence="4">
    <location>
        <begin position="132"/>
        <end position="144"/>
    </location>
</feature>
<feature type="compositionally biased region" description="Basic and acidic residues" evidence="4">
    <location>
        <begin position="145"/>
        <end position="165"/>
    </location>
</feature>
<feature type="compositionally biased region" description="Acidic residues" evidence="4">
    <location>
        <begin position="347"/>
        <end position="378"/>
    </location>
</feature>
<feature type="compositionally biased region" description="Basic and acidic residues" evidence="4">
    <location>
        <begin position="379"/>
        <end position="393"/>
    </location>
</feature>
<feature type="splice variant" id="VSP_052858" description="In isoform 2." evidence="5">
    <original>N</original>
    <variation>KTKKKNAALS</variation>
    <location>
        <position position="6"/>
    </location>
</feature>
<proteinExistence type="evidence at transcript level"/>
<sequence>MANIDNKEQTELDQQDMEDVEDIEEEEAGEDANSKARQLTAQMMQNPQVLAALQERLDDLVGTPTGYIESLPKVVKRRVNALKNLQVKCAQIEAKFYEEVHELERKYAALYQPLFDKRSDIINATYEPTEEECEWKVDEEEDISGDLKDKAKLEEEKKDEEKEDPKGIPEFWLTVFKNVDLLSDMVQEHDEPILKHLKDIKVKFSEAGQPMSFTLEFHFEPNDFFTNEVLTKTYKMRSEPDESDPFSFDGPEIMGCTGCLIDWKKGKNVTLKTIKKKQKHKGRGTVRTVTKTVPNDSFFNFFSPPEVPENGELDDDAEAILTADFEIGHFLRERIIPRSVLYFTGEAIEDDDDDYDEEGEEADDEEGEEEADEDNDPDYEPKKDQNPAECKQQ</sequence>
<name>NP1L1_XENTR</name>
<protein>
    <recommendedName>
        <fullName evidence="7">Nucleosome assembly protein 1-like 1</fullName>
    </recommendedName>
</protein>
<reference evidence="6 10" key="1">
    <citation type="submission" date="2006-10" db="EMBL/GenBank/DDBJ databases">
        <authorList>
            <consortium name="Sanger Xenopus tropicalis EST/cDNA project"/>
        </authorList>
    </citation>
    <scope>NUCLEOTIDE SEQUENCE [LARGE SCALE MRNA] (ISOFORM 1)</scope>
    <source>
        <tissue evidence="10">Neurula</tissue>
    </source>
</reference>
<reference evidence="6 10" key="2">
    <citation type="submission" date="2007-11" db="EMBL/GenBank/DDBJ databases">
        <authorList>
            <consortium name="NIH - Xenopus Gene Collection (XGC) project"/>
        </authorList>
    </citation>
    <scope>NUCLEOTIDE SEQUENCE [LARGE SCALE MRNA] (ISOFORMS 1 AND 2)</scope>
    <source>
        <strain evidence="8">N6</strain>
        <strain evidence="9">PopA</strain>
        <tissue evidence="8">Spleen</tissue>
        <tissue evidence="7">Tail bud</tissue>
    </source>
</reference>
<accession>Q28EB4</accession>
<accession>Q6NVB1</accession>
<gene>
    <name evidence="7" type="primary">nap1l1</name>
    <name type="ORF">TNeu131c07.1</name>
</gene>
<dbReference type="EMBL" id="CR848343">
    <property type="protein sequence ID" value="CAJ83249.1"/>
    <property type="molecule type" value="mRNA"/>
</dbReference>
<dbReference type="EMBL" id="BC068215">
    <property type="protein sequence ID" value="AAH68215.1"/>
    <property type="molecule type" value="mRNA"/>
</dbReference>
<dbReference type="EMBL" id="BC123975">
    <property type="protein sequence ID" value="AAI23976.1"/>
    <property type="molecule type" value="mRNA"/>
</dbReference>
<dbReference type="EMBL" id="BC154889">
    <property type="protein sequence ID" value="AAI54890.1"/>
    <property type="molecule type" value="mRNA"/>
</dbReference>
<dbReference type="RefSeq" id="NP_001001249.1">
    <molecule id="Q28EB4-2"/>
    <property type="nucleotide sequence ID" value="NM_001001249.2"/>
</dbReference>
<dbReference type="RefSeq" id="NP_001015984.1">
    <molecule id="Q28EB4-1"/>
    <property type="nucleotide sequence ID" value="NM_001015984.3"/>
</dbReference>
<dbReference type="SMR" id="Q28EB4"/>
<dbReference type="FunCoup" id="Q28EB4">
    <property type="interactions" value="3614"/>
</dbReference>
<dbReference type="STRING" id="8364.ENSXETP00000005442"/>
<dbReference type="PaxDb" id="8364-ENSXETP00000054165"/>
<dbReference type="DNASU" id="407956"/>
<dbReference type="GeneID" id="407956"/>
<dbReference type="KEGG" id="xtr:407956"/>
<dbReference type="AGR" id="Xenbase:XB-GENE-484197"/>
<dbReference type="CTD" id="4673"/>
<dbReference type="Xenbase" id="XB-GENE-484197">
    <property type="gene designation" value="nap1l1"/>
</dbReference>
<dbReference type="eggNOG" id="KOG1507">
    <property type="taxonomic scope" value="Eukaryota"/>
</dbReference>
<dbReference type="HOGENOM" id="CLU_038841_3_0_1"/>
<dbReference type="InParanoid" id="Q28EB4"/>
<dbReference type="OMA" id="AAECKQN"/>
<dbReference type="OrthoDB" id="27325at2759"/>
<dbReference type="Proteomes" id="UP000008143">
    <property type="component" value="Chromosome 3"/>
</dbReference>
<dbReference type="Bgee" id="ENSXETG00000013323">
    <property type="expression patterns" value="Expressed in ovary and 31 other cell types or tissues"/>
</dbReference>
<dbReference type="GO" id="GO:0005737">
    <property type="term" value="C:cytoplasm"/>
    <property type="evidence" value="ECO:0000250"/>
    <property type="project" value="UniProtKB"/>
</dbReference>
<dbReference type="GO" id="GO:0005634">
    <property type="term" value="C:nucleus"/>
    <property type="evidence" value="ECO:0000250"/>
    <property type="project" value="UniProtKB"/>
</dbReference>
<dbReference type="GO" id="GO:0030332">
    <property type="term" value="F:cyclin binding"/>
    <property type="evidence" value="ECO:0000250"/>
    <property type="project" value="UniProtKB"/>
</dbReference>
<dbReference type="GO" id="GO:0042393">
    <property type="term" value="F:histone binding"/>
    <property type="evidence" value="ECO:0000250"/>
    <property type="project" value="UniProtKB"/>
</dbReference>
<dbReference type="GO" id="GO:0042802">
    <property type="term" value="F:identical protein binding"/>
    <property type="evidence" value="ECO:0000250"/>
    <property type="project" value="UniProtKB"/>
</dbReference>
<dbReference type="GO" id="GO:0006334">
    <property type="term" value="P:nucleosome assembly"/>
    <property type="evidence" value="ECO:0000250"/>
    <property type="project" value="UniProtKB"/>
</dbReference>
<dbReference type="GO" id="GO:0045944">
    <property type="term" value="P:positive regulation of transcription by RNA polymerase II"/>
    <property type="evidence" value="ECO:0000250"/>
    <property type="project" value="UniProtKB"/>
</dbReference>
<dbReference type="GO" id="GO:0060215">
    <property type="term" value="P:primitive hemopoiesis"/>
    <property type="evidence" value="ECO:0000250"/>
    <property type="project" value="UniProtKB"/>
</dbReference>
<dbReference type="GO" id="GO:0007283">
    <property type="term" value="P:spermatogenesis"/>
    <property type="evidence" value="ECO:0007669"/>
    <property type="project" value="UniProtKB-KW"/>
</dbReference>
<dbReference type="FunFam" id="1.20.5.1500:FF:000001">
    <property type="entry name" value="Nucleosome assembly protein 1-like 1"/>
    <property type="match status" value="1"/>
</dbReference>
<dbReference type="FunFam" id="3.30.1120.90:FF:000001">
    <property type="entry name" value="Nucleosome assembly protein 1-like 1"/>
    <property type="match status" value="1"/>
</dbReference>
<dbReference type="Gene3D" id="1.20.5.1500">
    <property type="match status" value="1"/>
</dbReference>
<dbReference type="Gene3D" id="3.30.1120.90">
    <property type="entry name" value="Nucleosome assembly protein"/>
    <property type="match status" value="1"/>
</dbReference>
<dbReference type="InterPro" id="IPR037231">
    <property type="entry name" value="NAP-like_sf"/>
</dbReference>
<dbReference type="InterPro" id="IPR002164">
    <property type="entry name" value="NAP_family"/>
</dbReference>
<dbReference type="PANTHER" id="PTHR11875">
    <property type="entry name" value="TESTIS-SPECIFIC Y-ENCODED PROTEIN"/>
    <property type="match status" value="1"/>
</dbReference>
<dbReference type="Pfam" id="PF00956">
    <property type="entry name" value="NAP"/>
    <property type="match status" value="1"/>
</dbReference>
<dbReference type="SUPFAM" id="SSF143113">
    <property type="entry name" value="NAP-like"/>
    <property type="match status" value="1"/>
</dbReference>